<accession>Q94990</accession>
<accession>B4M6E0</accession>
<gene>
    <name type="primary">Cec2A</name>
    <name type="ORF">GJ10757</name>
</gene>
<gene>
    <name type="primary">Cec2B</name>
    <name type="ORF">GJ10406</name>
</gene>
<evidence type="ECO:0000250" key="1"/>
<evidence type="ECO:0000305" key="2"/>
<comment type="function">
    <text>Cecropins have lytic and antibacterial activity against several Gram-positive and Gram-negative bacteria.</text>
</comment>
<comment type="subcellular location">
    <subcellularLocation>
        <location>Secreted</location>
    </subcellularLocation>
</comment>
<comment type="similarity">
    <text evidence="2">Belongs to the cecropin family.</text>
</comment>
<dbReference type="EMBL" id="U71249">
    <property type="protein sequence ID" value="AAB18323.1"/>
    <property type="molecule type" value="Genomic_DNA"/>
</dbReference>
<dbReference type="EMBL" id="U71249">
    <property type="protein sequence ID" value="AAB18325.1"/>
    <property type="molecule type" value="Genomic_DNA"/>
</dbReference>
<dbReference type="EMBL" id="CH940652">
    <property type="protein sequence ID" value="EDW59216.1"/>
    <property type="molecule type" value="Genomic_DNA"/>
</dbReference>
<dbReference type="EMBL" id="CH940652">
    <property type="protein sequence ID" value="EDW59218.1"/>
    <property type="molecule type" value="Genomic_DNA"/>
</dbReference>
<dbReference type="RefSeq" id="XP_002056106.2">
    <property type="nucleotide sequence ID" value="XM_002056070.2"/>
</dbReference>
<dbReference type="SMR" id="Q94990"/>
<dbReference type="FunCoup" id="Q94990">
    <property type="interactions" value="84"/>
</dbReference>
<dbReference type="STRING" id="7244.Q94990"/>
<dbReference type="EnsemblMetazoa" id="FBtr0226331">
    <property type="protein sequence ID" value="FBpp0224823"/>
    <property type="gene ID" value="FBgn0017816"/>
</dbReference>
<dbReference type="EnsemblMetazoa" id="XM_002056068.3">
    <property type="protein sequence ID" value="XP_002056104.1"/>
    <property type="gene ID" value="LOC6632627"/>
</dbReference>
<dbReference type="GeneID" id="6632627"/>
<dbReference type="GeneID" id="6632629"/>
<dbReference type="KEGG" id="dvi:6632627"/>
<dbReference type="KEGG" id="dvi:6632629"/>
<dbReference type="eggNOG" id="ENOG502TCNK">
    <property type="taxonomic scope" value="Eukaryota"/>
</dbReference>
<dbReference type="HOGENOM" id="CLU_187909_1_0_1"/>
<dbReference type="InParanoid" id="Q94990"/>
<dbReference type="OMA" id="IAICNVQ"/>
<dbReference type="OrthoDB" id="7410372at2759"/>
<dbReference type="PhylomeDB" id="Q94990"/>
<dbReference type="Proteomes" id="UP000008792">
    <property type="component" value="Unassembled WGS sequence"/>
</dbReference>
<dbReference type="GO" id="GO:0005615">
    <property type="term" value="C:extracellular space"/>
    <property type="evidence" value="ECO:0007669"/>
    <property type="project" value="TreeGrafter"/>
</dbReference>
<dbReference type="GO" id="GO:0019731">
    <property type="term" value="P:antibacterial humoral response"/>
    <property type="evidence" value="ECO:0007669"/>
    <property type="project" value="InterPro"/>
</dbReference>
<dbReference type="GO" id="GO:0050829">
    <property type="term" value="P:defense response to Gram-negative bacterium"/>
    <property type="evidence" value="ECO:0007669"/>
    <property type="project" value="UniProtKB-ARBA"/>
</dbReference>
<dbReference type="GO" id="GO:0050830">
    <property type="term" value="P:defense response to Gram-positive bacterium"/>
    <property type="evidence" value="ECO:0007669"/>
    <property type="project" value="TreeGrafter"/>
</dbReference>
<dbReference type="GO" id="GO:0045087">
    <property type="term" value="P:innate immune response"/>
    <property type="evidence" value="ECO:0007669"/>
    <property type="project" value="UniProtKB-KW"/>
</dbReference>
<dbReference type="InterPro" id="IPR000875">
    <property type="entry name" value="Cecropin"/>
</dbReference>
<dbReference type="InterPro" id="IPR020400">
    <property type="entry name" value="Cecropin_insect"/>
</dbReference>
<dbReference type="PANTHER" id="PTHR38329">
    <property type="entry name" value="CECROPIN-A1-RELATED"/>
    <property type="match status" value="1"/>
</dbReference>
<dbReference type="PANTHER" id="PTHR38329:SF1">
    <property type="entry name" value="CECROPIN-A1-RELATED"/>
    <property type="match status" value="1"/>
</dbReference>
<dbReference type="Pfam" id="PF00272">
    <property type="entry name" value="Cecropin"/>
    <property type="match status" value="1"/>
</dbReference>
<dbReference type="PROSITE" id="PS00268">
    <property type="entry name" value="CECROPIN"/>
    <property type="match status" value="1"/>
</dbReference>
<keyword id="KW-0027">Amidation</keyword>
<keyword id="KW-0044">Antibiotic</keyword>
<keyword id="KW-0929">Antimicrobial</keyword>
<keyword id="KW-0391">Immunity</keyword>
<keyword id="KW-0399">Innate immunity</keyword>
<keyword id="KW-1185">Reference proteome</keyword>
<keyword id="KW-0964">Secreted</keyword>
<keyword id="KW-0732">Signal</keyword>
<organism>
    <name type="scientific">Drosophila virilis</name>
    <name type="common">Fruit fly</name>
    <dbReference type="NCBI Taxonomy" id="7244"/>
    <lineage>
        <taxon>Eukaryota</taxon>
        <taxon>Metazoa</taxon>
        <taxon>Ecdysozoa</taxon>
        <taxon>Arthropoda</taxon>
        <taxon>Hexapoda</taxon>
        <taxon>Insecta</taxon>
        <taxon>Pterygota</taxon>
        <taxon>Neoptera</taxon>
        <taxon>Endopterygota</taxon>
        <taxon>Diptera</taxon>
        <taxon>Brachycera</taxon>
        <taxon>Muscomorpha</taxon>
        <taxon>Ephydroidea</taxon>
        <taxon>Drosophilidae</taxon>
        <taxon>Drosophila</taxon>
    </lineage>
</organism>
<feature type="signal peptide" evidence="1">
    <location>
        <begin position="1"/>
        <end position="23"/>
    </location>
</feature>
<feature type="chain" id="PRO_0000004857" description="Cecropin-2">
    <location>
        <begin position="24"/>
        <end position="62"/>
    </location>
</feature>
<feature type="modified residue" description="Arginine amide" evidence="1">
    <location>
        <position position="62"/>
    </location>
</feature>
<protein>
    <recommendedName>
        <fullName>Cecropin-2</fullName>
    </recommendedName>
</protein>
<sequence>MNFYKVFIFVALILAISLGQSEAGWLKKIGKKIERVGQHTRDATIQGLGIAQQAANVAATARG</sequence>
<reference key="1">
    <citation type="journal article" date="1997" name="J. Mol. Evol.">
        <title>Identification and characterization of the Cecropin antibacterial protein gene locus in Drosophila virilis.</title>
        <authorList>
            <person name="Zhou X."/>
            <person name="Nguyen T."/>
            <person name="Kimbrell D.A."/>
        </authorList>
    </citation>
    <scope>NUCLEOTIDE SEQUENCE [GENOMIC DNA] (CEC2A AND CEC2B)</scope>
</reference>
<reference key="2">
    <citation type="journal article" date="2007" name="Nature">
        <title>Evolution of genes and genomes on the Drosophila phylogeny.</title>
        <authorList>
            <consortium name="Drosophila 12 genomes consortium"/>
        </authorList>
    </citation>
    <scope>NUCLEOTIDE SEQUENCE [LARGE SCALE GENOMIC DNA] (CEC2A AND CEC2B)</scope>
    <source>
        <strain>Tucson 15010-1051.87</strain>
    </source>
</reference>
<name>CEC2_DROVI</name>
<proteinExistence type="inferred from homology"/>